<sequence>MKAVVSKLYCSSMEEVMVVRRRPHVVNGGGFVVTDYKEKIVFKIDGCGVLGTKGELVLRDSDGNDLLLIHKKGGVVQALSIHNKWKGYSYDYQGSPKPVFTLRDPKHSCFSITSSIRISVGPGNCYFDVKGYFPDRDCSIVDSKGNVIAQVKEWIGSRDIYKVVTKPSVDKAFVFGVIAVLDYIYGESTSC</sequence>
<comment type="function">
    <text evidence="1">Might be related to the phospholipid scramblase and tubby-like superfamily of membrane tethered transcription factors.</text>
</comment>
<comment type="similarity">
    <text evidence="2">Belongs to the LOR family.</text>
</comment>
<evidence type="ECO:0000250" key="1"/>
<evidence type="ECO:0000305" key="2"/>
<accession>Q9ZUF7</accession>
<feature type="chain" id="PRO_0000399238" description="Protein LURP-one-related 6">
    <location>
        <begin position="1"/>
        <end position="191"/>
    </location>
</feature>
<reference key="1">
    <citation type="journal article" date="1999" name="Nature">
        <title>Sequence and analysis of chromosome 2 of the plant Arabidopsis thaliana.</title>
        <authorList>
            <person name="Lin X."/>
            <person name="Kaul S."/>
            <person name="Rounsley S.D."/>
            <person name="Shea T.P."/>
            <person name="Benito M.-I."/>
            <person name="Town C.D."/>
            <person name="Fujii C.Y."/>
            <person name="Mason T.M."/>
            <person name="Bowman C.L."/>
            <person name="Barnstead M.E."/>
            <person name="Feldblyum T.V."/>
            <person name="Buell C.R."/>
            <person name="Ketchum K.A."/>
            <person name="Lee J.J."/>
            <person name="Ronning C.M."/>
            <person name="Koo H.L."/>
            <person name="Moffat K.S."/>
            <person name="Cronin L.A."/>
            <person name="Shen M."/>
            <person name="Pai G."/>
            <person name="Van Aken S."/>
            <person name="Umayam L."/>
            <person name="Tallon L.J."/>
            <person name="Gill J.E."/>
            <person name="Adams M.D."/>
            <person name="Carrera A.J."/>
            <person name="Creasy T.H."/>
            <person name="Goodman H.M."/>
            <person name="Somerville C.R."/>
            <person name="Copenhaver G.P."/>
            <person name="Preuss D."/>
            <person name="Nierman W.C."/>
            <person name="White O."/>
            <person name="Eisen J.A."/>
            <person name="Salzberg S.L."/>
            <person name="Fraser C.M."/>
            <person name="Venter J.C."/>
        </authorList>
    </citation>
    <scope>NUCLEOTIDE SEQUENCE [LARGE SCALE GENOMIC DNA]</scope>
    <source>
        <strain>cv. Columbia</strain>
    </source>
</reference>
<reference key="2">
    <citation type="journal article" date="2017" name="Plant J.">
        <title>Araport11: a complete reannotation of the Arabidopsis thaliana reference genome.</title>
        <authorList>
            <person name="Cheng C.Y."/>
            <person name="Krishnakumar V."/>
            <person name="Chan A.P."/>
            <person name="Thibaud-Nissen F."/>
            <person name="Schobel S."/>
            <person name="Town C.D."/>
        </authorList>
    </citation>
    <scope>GENOME REANNOTATION</scope>
    <source>
        <strain>cv. Columbia</strain>
    </source>
</reference>
<reference key="3">
    <citation type="submission" date="2004-03" db="EMBL/GenBank/DDBJ databases">
        <title>Arabidopsis ORF clones.</title>
        <authorList>
            <person name="Kim C.J."/>
            <person name="Chen H."/>
            <person name="Cheuk R."/>
            <person name="Shinn P."/>
            <person name="Carninci P."/>
            <person name="Hayashizaki Y."/>
            <person name="Ishida J."/>
            <person name="Kamiya A."/>
            <person name="Kawai J."/>
            <person name="Narusaka M."/>
            <person name="Sakurai T."/>
            <person name="Satou M."/>
            <person name="Seki M."/>
            <person name="Shinozaki K."/>
            <person name="Ecker J.R."/>
        </authorList>
    </citation>
    <scope>NUCLEOTIDE SEQUENCE [LARGE SCALE MRNA]</scope>
    <source>
        <strain>cv. Columbia</strain>
    </source>
</reference>
<reference key="4">
    <citation type="submission" date="2004-09" db="EMBL/GenBank/DDBJ databases">
        <title>Large-scale analysis of RIKEN Arabidopsis full-length (RAFL) cDNAs.</title>
        <authorList>
            <person name="Totoki Y."/>
            <person name="Seki M."/>
            <person name="Ishida J."/>
            <person name="Nakajima M."/>
            <person name="Enju A."/>
            <person name="Kamiya A."/>
            <person name="Narusaka M."/>
            <person name="Shin-i T."/>
            <person name="Nakagawa M."/>
            <person name="Sakamoto N."/>
            <person name="Oishi K."/>
            <person name="Kohara Y."/>
            <person name="Kobayashi M."/>
            <person name="Toyoda A."/>
            <person name="Sakaki Y."/>
            <person name="Sakurai T."/>
            <person name="Iida K."/>
            <person name="Akiyama K."/>
            <person name="Satou M."/>
            <person name="Toyoda T."/>
            <person name="Konagaya A."/>
            <person name="Carninci P."/>
            <person name="Kawai J."/>
            <person name="Hayashizaki Y."/>
            <person name="Shinozaki K."/>
        </authorList>
    </citation>
    <scope>NUCLEOTIDE SEQUENCE [LARGE SCALE MRNA]</scope>
    <source>
        <strain>cv. Columbia</strain>
    </source>
</reference>
<organism>
    <name type="scientific">Arabidopsis thaliana</name>
    <name type="common">Mouse-ear cress</name>
    <dbReference type="NCBI Taxonomy" id="3702"/>
    <lineage>
        <taxon>Eukaryota</taxon>
        <taxon>Viridiplantae</taxon>
        <taxon>Streptophyta</taxon>
        <taxon>Embryophyta</taxon>
        <taxon>Tracheophyta</taxon>
        <taxon>Spermatophyta</taxon>
        <taxon>Magnoliopsida</taxon>
        <taxon>eudicotyledons</taxon>
        <taxon>Gunneridae</taxon>
        <taxon>Pentapetalae</taxon>
        <taxon>rosids</taxon>
        <taxon>malvids</taxon>
        <taxon>Brassicales</taxon>
        <taxon>Brassicaceae</taxon>
        <taxon>Camelineae</taxon>
        <taxon>Arabidopsis</taxon>
    </lineage>
</organism>
<proteinExistence type="evidence at transcript level"/>
<protein>
    <recommendedName>
        <fullName>Protein LURP-one-related 6</fullName>
    </recommendedName>
</protein>
<dbReference type="EMBL" id="AC005970">
    <property type="protein sequence ID" value="AAC95168.1"/>
    <property type="molecule type" value="Genomic_DNA"/>
</dbReference>
<dbReference type="EMBL" id="CP002685">
    <property type="protein sequence ID" value="AEC05983.1"/>
    <property type="molecule type" value="Genomic_DNA"/>
</dbReference>
<dbReference type="EMBL" id="BT012170">
    <property type="protein sequence ID" value="AAS76265.1"/>
    <property type="molecule type" value="mRNA"/>
</dbReference>
<dbReference type="EMBL" id="AK176264">
    <property type="protein sequence ID" value="BAD44027.1"/>
    <property type="molecule type" value="mRNA"/>
</dbReference>
<dbReference type="PIR" id="H84472">
    <property type="entry name" value="H84472"/>
</dbReference>
<dbReference type="RefSeq" id="NP_178648.1">
    <property type="nucleotide sequence ID" value="NM_126604.4"/>
</dbReference>
<dbReference type="SMR" id="Q9ZUF7"/>
<dbReference type="FunCoup" id="Q9ZUF7">
    <property type="interactions" value="329"/>
</dbReference>
<dbReference type="STRING" id="3702.Q9ZUF7"/>
<dbReference type="PaxDb" id="3702-AT2G05910.1"/>
<dbReference type="ProteomicsDB" id="238716"/>
<dbReference type="EnsemblPlants" id="AT2G05910.1">
    <property type="protein sequence ID" value="AT2G05910.1"/>
    <property type="gene ID" value="AT2G05910"/>
</dbReference>
<dbReference type="GeneID" id="815143"/>
<dbReference type="Gramene" id="AT2G05910.1">
    <property type="protein sequence ID" value="AT2G05910.1"/>
    <property type="gene ID" value="AT2G05910"/>
</dbReference>
<dbReference type="KEGG" id="ath:AT2G05910"/>
<dbReference type="Araport" id="AT2G05910"/>
<dbReference type="TAIR" id="AT2G05910"/>
<dbReference type="eggNOG" id="ENOG502QSUY">
    <property type="taxonomic scope" value="Eukaryota"/>
</dbReference>
<dbReference type="HOGENOM" id="CLU_116956_0_0_1"/>
<dbReference type="InParanoid" id="Q9ZUF7"/>
<dbReference type="OMA" id="PENCYFD"/>
<dbReference type="OrthoDB" id="1916253at2759"/>
<dbReference type="PhylomeDB" id="Q9ZUF7"/>
<dbReference type="PRO" id="PR:Q9ZUF7"/>
<dbReference type="Proteomes" id="UP000006548">
    <property type="component" value="Chromosome 2"/>
</dbReference>
<dbReference type="ExpressionAtlas" id="Q9ZUF7">
    <property type="expression patterns" value="baseline and differential"/>
</dbReference>
<dbReference type="Gene3D" id="2.40.160.200">
    <property type="entry name" value="LURP1-related"/>
    <property type="match status" value="1"/>
</dbReference>
<dbReference type="InterPro" id="IPR007612">
    <property type="entry name" value="LOR"/>
</dbReference>
<dbReference type="InterPro" id="IPR038595">
    <property type="entry name" value="LOR_sf"/>
</dbReference>
<dbReference type="InterPro" id="IPR025659">
    <property type="entry name" value="Tubby-like_C"/>
</dbReference>
<dbReference type="PANTHER" id="PTHR31087">
    <property type="match status" value="1"/>
</dbReference>
<dbReference type="PANTHER" id="PTHR31087:SF3">
    <property type="entry name" value="PROTEIN LURP-ONE-RELATED 6"/>
    <property type="match status" value="1"/>
</dbReference>
<dbReference type="Pfam" id="PF04525">
    <property type="entry name" value="LOR"/>
    <property type="match status" value="1"/>
</dbReference>
<dbReference type="SUPFAM" id="SSF54518">
    <property type="entry name" value="Tubby C-terminal domain-like"/>
    <property type="match status" value="1"/>
</dbReference>
<name>LOR6_ARATH</name>
<gene>
    <name type="ordered locus">At2g05910</name>
    <name type="ORF">T6P5.11</name>
</gene>
<keyword id="KW-1185">Reference proteome</keyword>